<feature type="chain" id="PRO_0000382475" description="Transcription factor Sox-17-beta.3">
    <location>
        <begin position="1"/>
        <end position="376"/>
    </location>
</feature>
<feature type="domain" description="Sox C-terminal" evidence="4">
    <location>
        <begin position="259"/>
        <end position="376"/>
    </location>
</feature>
<feature type="DNA-binding region" description="HMG box" evidence="3">
    <location>
        <begin position="58"/>
        <end position="126"/>
    </location>
</feature>
<feature type="region of interest" description="Required for transcriptional activity and interaction with ctnnb1" evidence="1">
    <location>
        <begin position="327"/>
        <end position="331"/>
    </location>
</feature>
<feature type="short sequence motif" description="9aaTAD" evidence="2">
    <location>
        <begin position="326"/>
        <end position="334"/>
    </location>
</feature>
<name>S17B3_XENTR</name>
<proteinExistence type="inferred from homology"/>
<dbReference type="EMBL" id="AC148408">
    <property type="protein sequence ID" value="AAT71997.1"/>
    <property type="status" value="ALT_INIT"/>
    <property type="molecule type" value="Genomic_DNA"/>
</dbReference>
<dbReference type="SMR" id="Q6F2F0"/>
<dbReference type="PaxDb" id="8364-ENSXETP00000001541"/>
<dbReference type="eggNOG" id="KOG0527">
    <property type="taxonomic scope" value="Eukaryota"/>
</dbReference>
<dbReference type="InParanoid" id="Q6F2F0"/>
<dbReference type="Reactome" id="R-XTR-3769402">
    <property type="pathway name" value="Deactivation of the beta-catenin transactivating complex"/>
</dbReference>
<dbReference type="Proteomes" id="UP000008143">
    <property type="component" value="Unplaced"/>
</dbReference>
<dbReference type="Bgee" id="ENSXETG00000026438">
    <property type="expression patterns" value="Expressed in gastrula and 22 other cell types or tissues"/>
</dbReference>
<dbReference type="GO" id="GO:0005634">
    <property type="term" value="C:nucleus"/>
    <property type="evidence" value="ECO:0007669"/>
    <property type="project" value="UniProtKB-SubCell"/>
</dbReference>
<dbReference type="GO" id="GO:0003677">
    <property type="term" value="F:DNA binding"/>
    <property type="evidence" value="ECO:0007669"/>
    <property type="project" value="UniProtKB-KW"/>
</dbReference>
<dbReference type="GO" id="GO:0007369">
    <property type="term" value="P:gastrulation"/>
    <property type="evidence" value="ECO:0007669"/>
    <property type="project" value="UniProtKB-KW"/>
</dbReference>
<dbReference type="GO" id="GO:0016055">
    <property type="term" value="P:Wnt signaling pathway"/>
    <property type="evidence" value="ECO:0007669"/>
    <property type="project" value="UniProtKB-KW"/>
</dbReference>
<dbReference type="CDD" id="cd22047">
    <property type="entry name" value="HMG-box_SoxF_SOX17"/>
    <property type="match status" value="1"/>
</dbReference>
<dbReference type="FunFam" id="1.10.30.10:FF:000008">
    <property type="entry name" value="transcription factor SOX-7"/>
    <property type="match status" value="1"/>
</dbReference>
<dbReference type="Gene3D" id="1.10.30.10">
    <property type="entry name" value="High mobility group box domain"/>
    <property type="match status" value="1"/>
</dbReference>
<dbReference type="InterPro" id="IPR009071">
    <property type="entry name" value="HMG_box_dom"/>
</dbReference>
<dbReference type="InterPro" id="IPR036910">
    <property type="entry name" value="HMG_box_dom_sf"/>
</dbReference>
<dbReference type="InterPro" id="IPR021934">
    <property type="entry name" value="Sox_C"/>
</dbReference>
<dbReference type="InterPro" id="IPR050140">
    <property type="entry name" value="SRY-related_HMG-box_TF-like"/>
</dbReference>
<dbReference type="PANTHER" id="PTHR10270">
    <property type="entry name" value="SOX TRANSCRIPTION FACTOR"/>
    <property type="match status" value="1"/>
</dbReference>
<dbReference type="PANTHER" id="PTHR10270:SF326">
    <property type="entry name" value="TRANSCRIPTION FACTOR SOX-17-BETA.3"/>
    <property type="match status" value="1"/>
</dbReference>
<dbReference type="Pfam" id="PF00505">
    <property type="entry name" value="HMG_box"/>
    <property type="match status" value="1"/>
</dbReference>
<dbReference type="SMART" id="SM00398">
    <property type="entry name" value="HMG"/>
    <property type="match status" value="1"/>
</dbReference>
<dbReference type="SUPFAM" id="SSF47095">
    <property type="entry name" value="HMG-box"/>
    <property type="match status" value="1"/>
</dbReference>
<dbReference type="PROSITE" id="PS50118">
    <property type="entry name" value="HMG_BOX_2"/>
    <property type="match status" value="1"/>
</dbReference>
<dbReference type="PROSITE" id="PS51516">
    <property type="entry name" value="SOX_C"/>
    <property type="match status" value="1"/>
</dbReference>
<gene>
    <name type="primary">sox17b.3</name>
</gene>
<comment type="function">
    <text evidence="1">Transcription activator. Doesn't appear to bind to the consensus 5'-AACAAT-3' DNA binding site, but binds 5'-ATTGTT-3'. All of the sox17 proteins are required for embryonic endoderm development and gastrulation movements, and show some redundancy in function. In addition, the sox17 proteins have distinct but overlapping roles in later gut development. Acts downstream of vegt-signaling in endoderm differentiation to induce a range of endodermal genes both directly and indirectly. Also represses wnt-responsive genes to inhibit wnt/beta-catenin-mediated signaling (By similarity).</text>
</comment>
<comment type="subunit">
    <text evidence="1">Interacts (via C-terminus) with ctnnb1/beta-catenin (via Armadillo repeats); this interaction is required for inhibition of wnt-signaling.</text>
</comment>
<comment type="subcellular location">
    <subcellularLocation>
        <location evidence="1 3">Nucleus</location>
    </subcellularLocation>
</comment>
<comment type="domain">
    <text evidence="2">The 9aaTAD motif is a transactivation domain present in a large number of yeast and animal transcription factors.</text>
</comment>
<comment type="sequence caution" evidence="5">
    <conflict type="erroneous initiation">
        <sequence resource="EMBL-CDS" id="AAT71997"/>
    </conflict>
</comment>
<reference evidence="6" key="1">
    <citation type="submission" date="2004-07" db="EMBL/GenBank/DDBJ databases">
        <title>Sequence of Xenopus tropicalis development genes.</title>
        <authorList>
            <person name="Qin S."/>
            <person name="Dors M."/>
            <person name="Johnson E."/>
            <person name="Bloom S."/>
            <person name="Hood L."/>
            <person name="Rowen L."/>
        </authorList>
    </citation>
    <scope>NUCLEOTIDE SEQUENCE [GENOMIC DNA]</scope>
</reference>
<accession>Q6F2F0</accession>
<keyword id="KW-0010">Activator</keyword>
<keyword id="KW-0217">Developmental protein</keyword>
<keyword id="KW-0238">DNA-binding</keyword>
<keyword id="KW-0306">Gastrulation</keyword>
<keyword id="KW-0539">Nucleus</keyword>
<keyword id="KW-1185">Reference proteome</keyword>
<keyword id="KW-0804">Transcription</keyword>
<keyword id="KW-0805">Transcription regulation</keyword>
<keyword id="KW-0879">Wnt signaling pathway</keyword>
<sequence>MSSPDGGYASDDQIHGNCSVPIMMGQYEWTDPLTMFQDAKTKKEAGSANSRGKAEARIRRPMNAFMVWAKDERKRLAQQNPDLHNAELSKMLGKSWKSLTLASKRPFVEEAERLRVQHIQDYPDYKYRPRRKKQVKRMKREEEGFLPSANLAGPQVMGCNAMVGQNYKMQYSGQNSQQSQITPAGYFEDHNPVGYYYRGYNVSKYYMSQNSSGYCSPPAQGEYQALSYNFNSSYMPYQQNASTPAMGKQMAVKENIIQESPEHGIMGCQVSPQMYNGQMYVPECAKTHPVAQTEQHSSSHQSQQMVTQNYLPSQQDGHLESDIDKTEFDQYLMYEPKSDTELIYTIDQDSGAYSTNLLPSLISEANSVCYYDYCGV</sequence>
<evidence type="ECO:0000250" key="1">
    <source>
        <dbReference type="UniProtKB" id="O42601"/>
    </source>
</evidence>
<evidence type="ECO:0000250" key="2">
    <source>
        <dbReference type="UniProtKB" id="Q9H6I2"/>
    </source>
</evidence>
<evidence type="ECO:0000255" key="3">
    <source>
        <dbReference type="PROSITE-ProRule" id="PRU00267"/>
    </source>
</evidence>
<evidence type="ECO:0000255" key="4">
    <source>
        <dbReference type="PROSITE-ProRule" id="PRU00849"/>
    </source>
</evidence>
<evidence type="ECO:0000305" key="5"/>
<evidence type="ECO:0000312" key="6">
    <source>
        <dbReference type="EMBL" id="AAT71997.1"/>
    </source>
</evidence>
<organism>
    <name type="scientific">Xenopus tropicalis</name>
    <name type="common">Western clawed frog</name>
    <name type="synonym">Silurana tropicalis</name>
    <dbReference type="NCBI Taxonomy" id="8364"/>
    <lineage>
        <taxon>Eukaryota</taxon>
        <taxon>Metazoa</taxon>
        <taxon>Chordata</taxon>
        <taxon>Craniata</taxon>
        <taxon>Vertebrata</taxon>
        <taxon>Euteleostomi</taxon>
        <taxon>Amphibia</taxon>
        <taxon>Batrachia</taxon>
        <taxon>Anura</taxon>
        <taxon>Pipoidea</taxon>
        <taxon>Pipidae</taxon>
        <taxon>Xenopodinae</taxon>
        <taxon>Xenopus</taxon>
        <taxon>Silurana</taxon>
    </lineage>
</organism>
<protein>
    <recommendedName>
        <fullName>Transcription factor Sox-17-beta.3</fullName>
    </recommendedName>
    <alternativeName>
        <fullName>SRY (sex determining region Y)-box 17-beta.3</fullName>
    </alternativeName>
</protein>